<reference key="1">
    <citation type="journal article" date="2001" name="Microb. Drug Resist.">
        <title>Annotated draft genomic sequence from a Streptococcus pneumoniae type 19F clinical isolate.</title>
        <authorList>
            <person name="Dopazo J."/>
            <person name="Mendoza A."/>
            <person name="Herrero J."/>
            <person name="Caldara F."/>
            <person name="Humbert Y."/>
            <person name="Friedli L."/>
            <person name="Guerrier M."/>
            <person name="Grand-Schenk E."/>
            <person name="Gandin C."/>
            <person name="de Francesco M."/>
            <person name="Polissi A."/>
            <person name="Buell G."/>
            <person name="Feger G."/>
            <person name="Garcia E."/>
            <person name="Peitsch M."/>
            <person name="Garcia-Bustos J.F."/>
        </authorList>
    </citation>
    <scope>NUCLEOTIDE SEQUENCE [LARGE SCALE GENOMIC DNA]</scope>
    <source>
        <strain>G54</strain>
    </source>
</reference>
<reference key="2">
    <citation type="submission" date="2008-03" db="EMBL/GenBank/DDBJ databases">
        <title>Pneumococcal beta glucoside metabolism investigated by whole genome comparison.</title>
        <authorList>
            <person name="Mulas L."/>
            <person name="Trappetti C."/>
            <person name="Hakenbeck R."/>
            <person name="Iannelli F."/>
            <person name="Pozzi G."/>
            <person name="Davidsen T.M."/>
            <person name="Tettelin H."/>
            <person name="Oggioni M."/>
        </authorList>
    </citation>
    <scope>NUCLEOTIDE SEQUENCE [LARGE SCALE GENOMIC DNA]</scope>
    <source>
        <strain>G54</strain>
    </source>
</reference>
<keyword id="KW-0687">Ribonucleoprotein</keyword>
<keyword id="KW-0689">Ribosomal protein</keyword>
<keyword id="KW-0694">RNA-binding</keyword>
<keyword id="KW-0699">rRNA-binding</keyword>
<feature type="chain" id="PRO_1000141927" description="Large ribosomal subunit protein uL3">
    <location>
        <begin position="1"/>
        <end position="208"/>
    </location>
</feature>
<feature type="region of interest" description="Disordered" evidence="2">
    <location>
        <begin position="116"/>
        <end position="148"/>
    </location>
</feature>
<accession>B5E6F5</accession>
<evidence type="ECO:0000255" key="1">
    <source>
        <dbReference type="HAMAP-Rule" id="MF_01325"/>
    </source>
</evidence>
<evidence type="ECO:0000256" key="2">
    <source>
        <dbReference type="SAM" id="MobiDB-lite"/>
    </source>
</evidence>
<evidence type="ECO:0000305" key="3"/>
<name>RL3_STRP4</name>
<comment type="function">
    <text evidence="1">One of the primary rRNA binding proteins, it binds directly near the 3'-end of the 23S rRNA, where it nucleates assembly of the 50S subunit.</text>
</comment>
<comment type="subunit">
    <text evidence="1">Part of the 50S ribosomal subunit. Forms a cluster with proteins L14 and L19.</text>
</comment>
<comment type="similarity">
    <text evidence="1">Belongs to the universal ribosomal protein uL3 family.</text>
</comment>
<gene>
    <name evidence="1" type="primary">rplC</name>
    <name type="ordered locus">SPG_0195</name>
</gene>
<dbReference type="EMBL" id="CP001015">
    <property type="protein sequence ID" value="ACF55511.1"/>
    <property type="molecule type" value="Genomic_DNA"/>
</dbReference>
<dbReference type="SMR" id="B5E6F5"/>
<dbReference type="KEGG" id="spx:SPG_0195"/>
<dbReference type="HOGENOM" id="CLU_044142_4_1_9"/>
<dbReference type="GO" id="GO:0022625">
    <property type="term" value="C:cytosolic large ribosomal subunit"/>
    <property type="evidence" value="ECO:0007669"/>
    <property type="project" value="TreeGrafter"/>
</dbReference>
<dbReference type="GO" id="GO:0019843">
    <property type="term" value="F:rRNA binding"/>
    <property type="evidence" value="ECO:0007669"/>
    <property type="project" value="UniProtKB-UniRule"/>
</dbReference>
<dbReference type="GO" id="GO:0003735">
    <property type="term" value="F:structural constituent of ribosome"/>
    <property type="evidence" value="ECO:0007669"/>
    <property type="project" value="InterPro"/>
</dbReference>
<dbReference type="GO" id="GO:0006412">
    <property type="term" value="P:translation"/>
    <property type="evidence" value="ECO:0007669"/>
    <property type="project" value="UniProtKB-UniRule"/>
</dbReference>
<dbReference type="FunFam" id="2.40.30.10:FF:000004">
    <property type="entry name" value="50S ribosomal protein L3"/>
    <property type="match status" value="1"/>
</dbReference>
<dbReference type="FunFam" id="3.30.160.810:FF:000002">
    <property type="entry name" value="50S ribosomal protein L3"/>
    <property type="match status" value="1"/>
</dbReference>
<dbReference type="Gene3D" id="3.30.160.810">
    <property type="match status" value="1"/>
</dbReference>
<dbReference type="Gene3D" id="2.40.30.10">
    <property type="entry name" value="Translation factors"/>
    <property type="match status" value="1"/>
</dbReference>
<dbReference type="HAMAP" id="MF_01325_B">
    <property type="entry name" value="Ribosomal_uL3_B"/>
    <property type="match status" value="1"/>
</dbReference>
<dbReference type="InterPro" id="IPR000597">
    <property type="entry name" value="Ribosomal_uL3"/>
</dbReference>
<dbReference type="InterPro" id="IPR019927">
    <property type="entry name" value="Ribosomal_uL3_bac/org-type"/>
</dbReference>
<dbReference type="InterPro" id="IPR019926">
    <property type="entry name" value="Ribosomal_uL3_CS"/>
</dbReference>
<dbReference type="InterPro" id="IPR009000">
    <property type="entry name" value="Transl_B-barrel_sf"/>
</dbReference>
<dbReference type="NCBIfam" id="TIGR03625">
    <property type="entry name" value="L3_bact"/>
    <property type="match status" value="1"/>
</dbReference>
<dbReference type="PANTHER" id="PTHR11229">
    <property type="entry name" value="50S RIBOSOMAL PROTEIN L3"/>
    <property type="match status" value="1"/>
</dbReference>
<dbReference type="PANTHER" id="PTHR11229:SF16">
    <property type="entry name" value="LARGE RIBOSOMAL SUBUNIT PROTEIN UL3C"/>
    <property type="match status" value="1"/>
</dbReference>
<dbReference type="Pfam" id="PF00297">
    <property type="entry name" value="Ribosomal_L3"/>
    <property type="match status" value="1"/>
</dbReference>
<dbReference type="SUPFAM" id="SSF50447">
    <property type="entry name" value="Translation proteins"/>
    <property type="match status" value="1"/>
</dbReference>
<dbReference type="PROSITE" id="PS00474">
    <property type="entry name" value="RIBOSOMAL_L3"/>
    <property type="match status" value="1"/>
</dbReference>
<sequence>MTKGILGKKVGMTQIFTEAGELIPVTVIEATPNVVLQVKTVETDGYNAIQVGFDDKREVLSNKPAKGHVAKANTAPKRFIREFKNVEGLEVGAEITVETFAAGDVVDVTGTSKGKGFQGVIKRHGQSRGPMAHGSRYHRRPGSMGPVAPNRVFKGKNLAGRMGGDRVTIQNLEVVQVVPEKNVILIKGNVPGAKKSLITIKSAVKAGK</sequence>
<protein>
    <recommendedName>
        <fullName evidence="1">Large ribosomal subunit protein uL3</fullName>
    </recommendedName>
    <alternativeName>
        <fullName evidence="3">50S ribosomal protein L3</fullName>
    </alternativeName>
</protein>
<proteinExistence type="inferred from homology"/>
<organism>
    <name type="scientific">Streptococcus pneumoniae serotype 19F (strain G54)</name>
    <dbReference type="NCBI Taxonomy" id="512566"/>
    <lineage>
        <taxon>Bacteria</taxon>
        <taxon>Bacillati</taxon>
        <taxon>Bacillota</taxon>
        <taxon>Bacilli</taxon>
        <taxon>Lactobacillales</taxon>
        <taxon>Streptococcaceae</taxon>
        <taxon>Streptococcus</taxon>
    </lineage>
</organism>